<protein>
    <recommendedName>
        <fullName>Snaclec 4</fullName>
    </recommendedName>
    <alternativeName>
        <fullName>C-type lectin-like 4</fullName>
    </alternativeName>
</protein>
<proteinExistence type="evidence at transcript level"/>
<feature type="signal peptide" evidence="2">
    <location>
        <begin position="1"/>
        <end position="23"/>
    </location>
</feature>
<feature type="chain" id="PRO_0000017538" description="Snaclec 4">
    <location>
        <begin position="24"/>
        <end position="146"/>
    </location>
</feature>
<feature type="domain" description="C-type lectin" evidence="3">
    <location>
        <begin position="34"/>
        <end position="145"/>
    </location>
</feature>
<feature type="disulfide bond" evidence="3">
    <location>
        <begin position="27"/>
        <end position="38"/>
    </location>
</feature>
<feature type="disulfide bond" evidence="3">
    <location>
        <begin position="55"/>
        <end position="144"/>
    </location>
</feature>
<feature type="disulfide bond" description="Interchain" evidence="3">
    <location>
        <position position="100"/>
    </location>
</feature>
<feature type="disulfide bond" evidence="3">
    <location>
        <begin position="121"/>
        <end position="136"/>
    </location>
</feature>
<dbReference type="EMBL" id="DQ060417">
    <property type="protein sequence ID" value="AAY63873.1"/>
    <property type="molecule type" value="mRNA"/>
</dbReference>
<dbReference type="SMR" id="Q4PRC9"/>
<dbReference type="GO" id="GO:0005576">
    <property type="term" value="C:extracellular region"/>
    <property type="evidence" value="ECO:0007669"/>
    <property type="project" value="UniProtKB-SubCell"/>
</dbReference>
<dbReference type="GO" id="GO:0090729">
    <property type="term" value="F:toxin activity"/>
    <property type="evidence" value="ECO:0007669"/>
    <property type="project" value="UniProtKB-KW"/>
</dbReference>
<dbReference type="FunFam" id="3.10.100.10:FF:000087">
    <property type="entry name" value="Snaclec rhodocetin subunit delta"/>
    <property type="match status" value="1"/>
</dbReference>
<dbReference type="Gene3D" id="3.10.100.10">
    <property type="entry name" value="Mannose-Binding Protein A, subunit A"/>
    <property type="match status" value="1"/>
</dbReference>
<dbReference type="InterPro" id="IPR001304">
    <property type="entry name" value="C-type_lectin-like"/>
</dbReference>
<dbReference type="InterPro" id="IPR016186">
    <property type="entry name" value="C-type_lectin-like/link_sf"/>
</dbReference>
<dbReference type="InterPro" id="IPR050111">
    <property type="entry name" value="C-type_lectin/snaclec_domain"/>
</dbReference>
<dbReference type="InterPro" id="IPR018378">
    <property type="entry name" value="C-type_lectin_CS"/>
</dbReference>
<dbReference type="InterPro" id="IPR016187">
    <property type="entry name" value="CTDL_fold"/>
</dbReference>
<dbReference type="PANTHER" id="PTHR22803">
    <property type="entry name" value="MANNOSE, PHOSPHOLIPASE, LECTIN RECEPTOR RELATED"/>
    <property type="match status" value="1"/>
</dbReference>
<dbReference type="Pfam" id="PF00059">
    <property type="entry name" value="Lectin_C"/>
    <property type="match status" value="1"/>
</dbReference>
<dbReference type="SMART" id="SM00034">
    <property type="entry name" value="CLECT"/>
    <property type="match status" value="1"/>
</dbReference>
<dbReference type="SUPFAM" id="SSF56436">
    <property type="entry name" value="C-type lectin-like"/>
    <property type="match status" value="1"/>
</dbReference>
<dbReference type="PROSITE" id="PS00615">
    <property type="entry name" value="C_TYPE_LECTIN_1"/>
    <property type="match status" value="1"/>
</dbReference>
<dbReference type="PROSITE" id="PS50041">
    <property type="entry name" value="C_TYPE_LECTIN_2"/>
    <property type="match status" value="1"/>
</dbReference>
<organism>
    <name type="scientific">Daboia siamensis</name>
    <name type="common">Eastern Russel's viper</name>
    <name type="synonym">Daboia russelii siamensis</name>
    <dbReference type="NCBI Taxonomy" id="343250"/>
    <lineage>
        <taxon>Eukaryota</taxon>
        <taxon>Metazoa</taxon>
        <taxon>Chordata</taxon>
        <taxon>Craniata</taxon>
        <taxon>Vertebrata</taxon>
        <taxon>Euteleostomi</taxon>
        <taxon>Lepidosauria</taxon>
        <taxon>Squamata</taxon>
        <taxon>Bifurcata</taxon>
        <taxon>Unidentata</taxon>
        <taxon>Episquamata</taxon>
        <taxon>Toxicofera</taxon>
        <taxon>Serpentes</taxon>
        <taxon>Colubroidea</taxon>
        <taxon>Viperidae</taxon>
        <taxon>Viperinae</taxon>
        <taxon>Daboia</taxon>
    </lineage>
</organism>
<reference key="1">
    <citation type="submission" date="2005-05" db="EMBL/GenBank/DDBJ databases">
        <title>Molecular cloning and sequence analysis of cDNAs encoding seven C-type lectin-like protein subunits from Daboia russellii siamensis.</title>
        <authorList>
            <person name="Zhong S."/>
            <person name="Jin Y."/>
            <person name="Li D."/>
            <person name="Wang W."/>
            <person name="Xiong Y."/>
        </authorList>
    </citation>
    <scope>NUCLEOTIDE SEQUENCE [MRNA]</scope>
</reference>
<sequence length="146" mass="16811">MGRFISISFGLLVVFLSLSGTEAAFCCPSGWSAYDQNCYKVFTEEMNWADAEKFCTEQKKGSHLVSLHSREEEKFVVNLISENLEYPATWIGLGNMWKDCRMEWSDRGNVKYKALAEESYCLIMITHEKVWKSMTCNFIAPVVCKF</sequence>
<name>SL4_DABSI</name>
<keyword id="KW-1015">Disulfide bond</keyword>
<keyword id="KW-1199">Hemostasis impairing toxin</keyword>
<keyword id="KW-0964">Secreted</keyword>
<keyword id="KW-0732">Signal</keyword>
<keyword id="KW-0800">Toxin</keyword>
<evidence type="ECO:0000250" key="1"/>
<evidence type="ECO:0000255" key="2"/>
<evidence type="ECO:0000255" key="3">
    <source>
        <dbReference type="PROSITE-ProRule" id="PRU00040"/>
    </source>
</evidence>
<evidence type="ECO:0000305" key="4"/>
<accession>Q4PRC9</accession>
<comment type="function">
    <text evidence="1">Interferes with one step of hemostasis (modulation of platelet aggregation, or coagulation cascade, for example).</text>
</comment>
<comment type="subunit">
    <text evidence="1">Heterodimer; disulfide-linked.</text>
</comment>
<comment type="subcellular location">
    <subcellularLocation>
        <location evidence="1">Secreted</location>
    </subcellularLocation>
</comment>
<comment type="similarity">
    <text evidence="4">Belongs to the snaclec family.</text>
</comment>